<gene>
    <name evidence="1" type="primary">dnaA</name>
    <name type="ordered locus">MCA3033</name>
</gene>
<reference key="1">
    <citation type="journal article" date="2004" name="PLoS Biol.">
        <title>Genomic insights into methanotrophy: the complete genome sequence of Methylococcus capsulatus (Bath).</title>
        <authorList>
            <person name="Ward N.L."/>
            <person name="Larsen O."/>
            <person name="Sakwa J."/>
            <person name="Bruseth L."/>
            <person name="Khouri H.M."/>
            <person name="Durkin A.S."/>
            <person name="Dimitrov G."/>
            <person name="Jiang L."/>
            <person name="Scanlan D."/>
            <person name="Kang K.H."/>
            <person name="Lewis M.R."/>
            <person name="Nelson K.E."/>
            <person name="Methe B.A."/>
            <person name="Wu M."/>
            <person name="Heidelberg J.F."/>
            <person name="Paulsen I.T."/>
            <person name="Fouts D.E."/>
            <person name="Ravel J."/>
            <person name="Tettelin H."/>
            <person name="Ren Q."/>
            <person name="Read T.D."/>
            <person name="DeBoy R.T."/>
            <person name="Seshadri R."/>
            <person name="Salzberg S.L."/>
            <person name="Jensen H.B."/>
            <person name="Birkeland N.K."/>
            <person name="Nelson W.C."/>
            <person name="Dodson R.J."/>
            <person name="Grindhaug S.H."/>
            <person name="Holt I.E."/>
            <person name="Eidhammer I."/>
            <person name="Jonasen I."/>
            <person name="Vanaken S."/>
            <person name="Utterback T.R."/>
            <person name="Feldblyum T.V."/>
            <person name="Fraser C.M."/>
            <person name="Lillehaug J.R."/>
            <person name="Eisen J.A."/>
        </authorList>
    </citation>
    <scope>NUCLEOTIDE SEQUENCE [LARGE SCALE GENOMIC DNA]</scope>
    <source>
        <strain>ATCC 33009 / NCIMB 11132 / Bath</strain>
    </source>
</reference>
<sequence>MSVLWSHCISKLEGELPPQQFNTWIRPLQAVEDGGELRLLAPNRFVLDWVKQHFIGKIEEVVSEQNRDSAPNVVLEIGSRAAEAAQMRSANPPRKTAPARKQVPNNLNSAFIFGNFVEGKSNQLAKAASLQVAQNVGRAYNPLFIYGGVGLGKTHLMHAIGNEILRGNPAANIVYLHSERFVSDMVKALQHNAINAFKEFYRTVDALLIDDIQFFAGKERSQEEFFHTFNTLLENKHQVVLTCDRYPKEIKGLEERLKSRFGWGLPVAIEPPDLETRVAILMSKAQQSGIDLSPEVAFFIGKRIRSNIRELEGALRRVIANAQFTGRPITLEFAKEALRDLIALQDRMINVENIQKTVSEYFKIRQADLLSNKRTRSLTRPRQIAMALSKELTSHSLPEIGQMFGGRDHTTVLHACRKVQELKESDARFMEDFSNLLRILSN</sequence>
<feature type="chain" id="PRO_0000114206" description="Chromosomal replication initiator protein DnaA">
    <location>
        <begin position="1"/>
        <end position="442"/>
    </location>
</feature>
<feature type="region of interest" description="Domain I, interacts with DnaA modulators" evidence="1">
    <location>
        <begin position="1"/>
        <end position="84"/>
    </location>
</feature>
<feature type="region of interest" description="Domain II" evidence="1">
    <location>
        <begin position="84"/>
        <end position="105"/>
    </location>
</feature>
<feature type="region of interest" description="Domain III, AAA+ region" evidence="1">
    <location>
        <begin position="106"/>
        <end position="322"/>
    </location>
</feature>
<feature type="region of interest" description="Domain IV, binds dsDNA" evidence="1">
    <location>
        <begin position="323"/>
        <end position="442"/>
    </location>
</feature>
<feature type="binding site" evidence="1">
    <location>
        <position position="150"/>
    </location>
    <ligand>
        <name>ATP</name>
        <dbReference type="ChEBI" id="CHEBI:30616"/>
    </ligand>
</feature>
<feature type="binding site" evidence="1">
    <location>
        <position position="152"/>
    </location>
    <ligand>
        <name>ATP</name>
        <dbReference type="ChEBI" id="CHEBI:30616"/>
    </ligand>
</feature>
<feature type="binding site" evidence="1">
    <location>
        <position position="153"/>
    </location>
    <ligand>
        <name>ATP</name>
        <dbReference type="ChEBI" id="CHEBI:30616"/>
    </ligand>
</feature>
<feature type="binding site" evidence="1">
    <location>
        <position position="154"/>
    </location>
    <ligand>
        <name>ATP</name>
        <dbReference type="ChEBI" id="CHEBI:30616"/>
    </ligand>
</feature>
<comment type="function">
    <text evidence="1">Plays an essential role in the initiation and regulation of chromosomal replication. ATP-DnaA binds to the origin of replication (oriC) to initiate formation of the DNA replication initiation complex once per cell cycle. Binds the DnaA box (a 9 base pair repeat at the origin) and separates the double-stranded (ds)DNA. Forms a right-handed helical filament on oriC DNA; dsDNA binds to the exterior of the filament while single-stranded (ss)DNA is stabiized in the filament's interior. The ATP-DnaA-oriC complex binds and stabilizes one strand of the AT-rich DNA unwinding element (DUE), permitting loading of DNA polymerase. After initiation quickly degrades to an ADP-DnaA complex that is not apt for DNA replication. Binds acidic phospholipids.</text>
</comment>
<comment type="subunit">
    <text evidence="1">Oligomerizes as a right-handed, spiral filament on DNA at oriC.</text>
</comment>
<comment type="subcellular location">
    <subcellularLocation>
        <location evidence="1">Cytoplasm</location>
    </subcellularLocation>
</comment>
<comment type="domain">
    <text evidence="1">Domain I is involved in oligomerization and binding regulators, domain II is flexibile and of varying length in different bacteria, domain III forms the AAA+ region, while domain IV binds dsDNA.</text>
</comment>
<comment type="similarity">
    <text evidence="1">Belongs to the DnaA family.</text>
</comment>
<keyword id="KW-0067">ATP-binding</keyword>
<keyword id="KW-0963">Cytoplasm</keyword>
<keyword id="KW-0235">DNA replication</keyword>
<keyword id="KW-0238">DNA-binding</keyword>
<keyword id="KW-0446">Lipid-binding</keyword>
<keyword id="KW-0547">Nucleotide-binding</keyword>
<keyword id="KW-1185">Reference proteome</keyword>
<accession>Q602N0</accession>
<evidence type="ECO:0000255" key="1">
    <source>
        <dbReference type="HAMAP-Rule" id="MF_00377"/>
    </source>
</evidence>
<proteinExistence type="inferred from homology"/>
<organism>
    <name type="scientific">Methylococcus capsulatus (strain ATCC 33009 / NCIMB 11132 / Bath)</name>
    <dbReference type="NCBI Taxonomy" id="243233"/>
    <lineage>
        <taxon>Bacteria</taxon>
        <taxon>Pseudomonadati</taxon>
        <taxon>Pseudomonadota</taxon>
        <taxon>Gammaproteobacteria</taxon>
        <taxon>Methylococcales</taxon>
        <taxon>Methylococcaceae</taxon>
        <taxon>Methylococcus</taxon>
    </lineage>
</organism>
<protein>
    <recommendedName>
        <fullName evidence="1">Chromosomal replication initiator protein DnaA</fullName>
    </recommendedName>
</protein>
<dbReference type="EMBL" id="AE017282">
    <property type="protein sequence ID" value="AAU90915.1"/>
    <property type="molecule type" value="Genomic_DNA"/>
</dbReference>
<dbReference type="RefSeq" id="WP_010962221.1">
    <property type="nucleotide sequence ID" value="NC_002977.6"/>
</dbReference>
<dbReference type="SMR" id="Q602N0"/>
<dbReference type="STRING" id="243233.MCA3033"/>
<dbReference type="GeneID" id="88225195"/>
<dbReference type="KEGG" id="mca:MCA3033"/>
<dbReference type="eggNOG" id="COG0593">
    <property type="taxonomic scope" value="Bacteria"/>
</dbReference>
<dbReference type="HOGENOM" id="CLU_026910_0_1_6"/>
<dbReference type="Proteomes" id="UP000006821">
    <property type="component" value="Chromosome"/>
</dbReference>
<dbReference type="GO" id="GO:0005737">
    <property type="term" value="C:cytoplasm"/>
    <property type="evidence" value="ECO:0007669"/>
    <property type="project" value="UniProtKB-SubCell"/>
</dbReference>
<dbReference type="GO" id="GO:0005886">
    <property type="term" value="C:plasma membrane"/>
    <property type="evidence" value="ECO:0007669"/>
    <property type="project" value="TreeGrafter"/>
</dbReference>
<dbReference type="GO" id="GO:0005524">
    <property type="term" value="F:ATP binding"/>
    <property type="evidence" value="ECO:0007669"/>
    <property type="project" value="UniProtKB-UniRule"/>
</dbReference>
<dbReference type="GO" id="GO:0016887">
    <property type="term" value="F:ATP hydrolysis activity"/>
    <property type="evidence" value="ECO:0007669"/>
    <property type="project" value="InterPro"/>
</dbReference>
<dbReference type="GO" id="GO:0003688">
    <property type="term" value="F:DNA replication origin binding"/>
    <property type="evidence" value="ECO:0007669"/>
    <property type="project" value="UniProtKB-UniRule"/>
</dbReference>
<dbReference type="GO" id="GO:0008289">
    <property type="term" value="F:lipid binding"/>
    <property type="evidence" value="ECO:0007669"/>
    <property type="project" value="UniProtKB-KW"/>
</dbReference>
<dbReference type="GO" id="GO:0006270">
    <property type="term" value="P:DNA replication initiation"/>
    <property type="evidence" value="ECO:0007669"/>
    <property type="project" value="UniProtKB-UniRule"/>
</dbReference>
<dbReference type="GO" id="GO:0006275">
    <property type="term" value="P:regulation of DNA replication"/>
    <property type="evidence" value="ECO:0007669"/>
    <property type="project" value="UniProtKB-UniRule"/>
</dbReference>
<dbReference type="CDD" id="cd00009">
    <property type="entry name" value="AAA"/>
    <property type="match status" value="1"/>
</dbReference>
<dbReference type="CDD" id="cd06571">
    <property type="entry name" value="Bac_DnaA_C"/>
    <property type="match status" value="1"/>
</dbReference>
<dbReference type="FunFam" id="1.10.8.60:FF:000003">
    <property type="entry name" value="Chromosomal replication initiator protein DnaA"/>
    <property type="match status" value="1"/>
</dbReference>
<dbReference type="FunFam" id="3.40.50.300:FF:000103">
    <property type="entry name" value="Chromosomal replication initiator protein DnaA"/>
    <property type="match status" value="1"/>
</dbReference>
<dbReference type="Gene3D" id="1.10.1750.10">
    <property type="match status" value="1"/>
</dbReference>
<dbReference type="Gene3D" id="1.10.8.60">
    <property type="match status" value="1"/>
</dbReference>
<dbReference type="Gene3D" id="3.30.300.180">
    <property type="match status" value="1"/>
</dbReference>
<dbReference type="Gene3D" id="3.40.50.300">
    <property type="entry name" value="P-loop containing nucleotide triphosphate hydrolases"/>
    <property type="match status" value="1"/>
</dbReference>
<dbReference type="HAMAP" id="MF_00377">
    <property type="entry name" value="DnaA_bact"/>
    <property type="match status" value="1"/>
</dbReference>
<dbReference type="InterPro" id="IPR003593">
    <property type="entry name" value="AAA+_ATPase"/>
</dbReference>
<dbReference type="InterPro" id="IPR001957">
    <property type="entry name" value="Chromosome_initiator_DnaA"/>
</dbReference>
<dbReference type="InterPro" id="IPR020591">
    <property type="entry name" value="Chromosome_initiator_DnaA-like"/>
</dbReference>
<dbReference type="InterPro" id="IPR018312">
    <property type="entry name" value="Chromosome_initiator_DnaA_CS"/>
</dbReference>
<dbReference type="InterPro" id="IPR013159">
    <property type="entry name" value="DnaA_C"/>
</dbReference>
<dbReference type="InterPro" id="IPR013317">
    <property type="entry name" value="DnaA_dom"/>
</dbReference>
<dbReference type="InterPro" id="IPR024633">
    <property type="entry name" value="DnaA_N_dom"/>
</dbReference>
<dbReference type="InterPro" id="IPR038454">
    <property type="entry name" value="DnaA_N_sf"/>
</dbReference>
<dbReference type="InterPro" id="IPR027417">
    <property type="entry name" value="P-loop_NTPase"/>
</dbReference>
<dbReference type="InterPro" id="IPR010921">
    <property type="entry name" value="Trp_repressor/repl_initiator"/>
</dbReference>
<dbReference type="NCBIfam" id="TIGR00362">
    <property type="entry name" value="DnaA"/>
    <property type="match status" value="1"/>
</dbReference>
<dbReference type="PANTHER" id="PTHR30050">
    <property type="entry name" value="CHROMOSOMAL REPLICATION INITIATOR PROTEIN DNAA"/>
    <property type="match status" value="1"/>
</dbReference>
<dbReference type="PANTHER" id="PTHR30050:SF2">
    <property type="entry name" value="CHROMOSOMAL REPLICATION INITIATOR PROTEIN DNAA"/>
    <property type="match status" value="1"/>
</dbReference>
<dbReference type="Pfam" id="PF00308">
    <property type="entry name" value="Bac_DnaA"/>
    <property type="match status" value="1"/>
</dbReference>
<dbReference type="Pfam" id="PF08299">
    <property type="entry name" value="Bac_DnaA_C"/>
    <property type="match status" value="1"/>
</dbReference>
<dbReference type="Pfam" id="PF11638">
    <property type="entry name" value="DnaA_N"/>
    <property type="match status" value="1"/>
</dbReference>
<dbReference type="PRINTS" id="PR00051">
    <property type="entry name" value="DNAA"/>
</dbReference>
<dbReference type="SMART" id="SM00382">
    <property type="entry name" value="AAA"/>
    <property type="match status" value="1"/>
</dbReference>
<dbReference type="SMART" id="SM00760">
    <property type="entry name" value="Bac_DnaA_C"/>
    <property type="match status" value="1"/>
</dbReference>
<dbReference type="SUPFAM" id="SSF52540">
    <property type="entry name" value="P-loop containing nucleoside triphosphate hydrolases"/>
    <property type="match status" value="1"/>
</dbReference>
<dbReference type="SUPFAM" id="SSF48295">
    <property type="entry name" value="TrpR-like"/>
    <property type="match status" value="1"/>
</dbReference>
<dbReference type="PROSITE" id="PS01008">
    <property type="entry name" value="DNAA"/>
    <property type="match status" value="1"/>
</dbReference>
<name>DNAA_METCA</name>